<evidence type="ECO:0000250" key="1"/>
<evidence type="ECO:0000255" key="2"/>
<evidence type="ECO:0000255" key="3">
    <source>
        <dbReference type="PROSITE-ProRule" id="PRU00175"/>
    </source>
</evidence>
<evidence type="ECO:0000305" key="4"/>
<name>ATL78_ARATH</name>
<proteinExistence type="evidence at transcript level"/>
<dbReference type="EC" id="2.3.2.27" evidence="4"/>
<dbReference type="EMBL" id="AC016041">
    <property type="protein sequence ID" value="AAF69723.1"/>
    <property type="status" value="ALT_SEQ"/>
    <property type="molecule type" value="Genomic_DNA"/>
</dbReference>
<dbReference type="EMBL" id="CP002684">
    <property type="protein sequence ID" value="AEE32407.1"/>
    <property type="molecule type" value="Genomic_DNA"/>
</dbReference>
<dbReference type="EMBL" id="BT010489">
    <property type="protein sequence ID" value="AAQ65112.1"/>
    <property type="molecule type" value="mRNA"/>
</dbReference>
<dbReference type="EMBL" id="AK176235">
    <property type="protein sequence ID" value="BAD43998.1"/>
    <property type="molecule type" value="mRNA"/>
</dbReference>
<dbReference type="EMBL" id="AK176512">
    <property type="protein sequence ID" value="BAD44275.1"/>
    <property type="molecule type" value="mRNA"/>
</dbReference>
<dbReference type="PIR" id="G96528">
    <property type="entry name" value="G96528"/>
</dbReference>
<dbReference type="RefSeq" id="NP_175349.1">
    <property type="nucleotide sequence ID" value="NM_103813.4"/>
</dbReference>
<dbReference type="SMR" id="Q6NQG7"/>
<dbReference type="BioGRID" id="26571">
    <property type="interactions" value="39"/>
</dbReference>
<dbReference type="IntAct" id="Q6NQG7">
    <property type="interactions" value="36"/>
</dbReference>
<dbReference type="STRING" id="3702.Q6NQG7"/>
<dbReference type="GlyGen" id="Q6NQG7">
    <property type="glycosylation" value="1 site"/>
</dbReference>
<dbReference type="PaxDb" id="3702-AT1G49230.1"/>
<dbReference type="EnsemblPlants" id="AT1G49230.1">
    <property type="protein sequence ID" value="AT1G49230.1"/>
    <property type="gene ID" value="AT1G49230"/>
</dbReference>
<dbReference type="GeneID" id="841346"/>
<dbReference type="Gramene" id="AT1G49230.1">
    <property type="protein sequence ID" value="AT1G49230.1"/>
    <property type="gene ID" value="AT1G49230"/>
</dbReference>
<dbReference type="KEGG" id="ath:AT1G49230"/>
<dbReference type="Araport" id="AT1G49230"/>
<dbReference type="TAIR" id="AT1G49230">
    <property type="gene designation" value="ATL78"/>
</dbReference>
<dbReference type="eggNOG" id="KOG0800">
    <property type="taxonomic scope" value="Eukaryota"/>
</dbReference>
<dbReference type="HOGENOM" id="CLU_013137_9_0_1"/>
<dbReference type="InParanoid" id="Q6NQG7"/>
<dbReference type="OMA" id="LPMCNHG"/>
<dbReference type="PhylomeDB" id="Q6NQG7"/>
<dbReference type="UniPathway" id="UPA00143"/>
<dbReference type="PRO" id="PR:Q6NQG7"/>
<dbReference type="Proteomes" id="UP000006548">
    <property type="component" value="Chromosome 1"/>
</dbReference>
<dbReference type="ExpressionAtlas" id="Q6NQG7">
    <property type="expression patterns" value="baseline and differential"/>
</dbReference>
<dbReference type="GO" id="GO:0016020">
    <property type="term" value="C:membrane"/>
    <property type="evidence" value="ECO:0007669"/>
    <property type="project" value="UniProtKB-SubCell"/>
</dbReference>
<dbReference type="GO" id="GO:0016740">
    <property type="term" value="F:transferase activity"/>
    <property type="evidence" value="ECO:0007669"/>
    <property type="project" value="UniProtKB-KW"/>
</dbReference>
<dbReference type="GO" id="GO:0008270">
    <property type="term" value="F:zinc ion binding"/>
    <property type="evidence" value="ECO:0007669"/>
    <property type="project" value="UniProtKB-KW"/>
</dbReference>
<dbReference type="GO" id="GO:0016567">
    <property type="term" value="P:protein ubiquitination"/>
    <property type="evidence" value="ECO:0007669"/>
    <property type="project" value="UniProtKB-UniPathway"/>
</dbReference>
<dbReference type="CDD" id="cd16461">
    <property type="entry name" value="RING-H2_EL5-like"/>
    <property type="match status" value="1"/>
</dbReference>
<dbReference type="Gene3D" id="3.30.40.10">
    <property type="entry name" value="Zinc/RING finger domain, C3HC4 (zinc finger)"/>
    <property type="match status" value="1"/>
</dbReference>
<dbReference type="InterPro" id="IPR044602">
    <property type="entry name" value="ATL10/ATL72-79-like"/>
</dbReference>
<dbReference type="InterPro" id="IPR001841">
    <property type="entry name" value="Znf_RING"/>
</dbReference>
<dbReference type="InterPro" id="IPR013083">
    <property type="entry name" value="Znf_RING/FYVE/PHD"/>
</dbReference>
<dbReference type="PANTHER" id="PTHR46905">
    <property type="entry name" value="RING-H2 FINGER PROTEIN ATL78"/>
    <property type="match status" value="1"/>
</dbReference>
<dbReference type="PANTHER" id="PTHR46905:SF7">
    <property type="entry name" value="RING-H2 FINGER PROTEIN ATL78"/>
    <property type="match status" value="1"/>
</dbReference>
<dbReference type="Pfam" id="PF13639">
    <property type="entry name" value="zf-RING_2"/>
    <property type="match status" value="1"/>
</dbReference>
<dbReference type="SMART" id="SM00184">
    <property type="entry name" value="RING"/>
    <property type="match status" value="1"/>
</dbReference>
<dbReference type="SUPFAM" id="SSF57850">
    <property type="entry name" value="RING/U-box"/>
    <property type="match status" value="1"/>
</dbReference>
<dbReference type="PROSITE" id="PS50089">
    <property type="entry name" value="ZF_RING_2"/>
    <property type="match status" value="1"/>
</dbReference>
<sequence length="219" mass="24286">MCTTISISISTIKPTEIFQEILGSSYSRKLLFHTHDQSPTPAPSPYVGDNNFDANVVMVLSVLLCALVCSLGLNSIIRCALRCSNLVPSEAGGDNYPVRLTNTGVKRKALKSFQTVSYSTELNLPGLDTECAICLSEFVAEERVKLLPTCHHGFHVRCIDKWLSSHSSCPTCRHCLIQTCEKIADCSQTSSLNSTQPPQDSIILQIAPLEPERWIRWFR</sequence>
<protein>
    <recommendedName>
        <fullName>RING-H2 finger protein ATL78</fullName>
        <ecNumber evidence="4">2.3.2.27</ecNumber>
    </recommendedName>
    <alternativeName>
        <fullName evidence="4">RING-type E3 ubiquitin transferase ATL78</fullName>
    </alternativeName>
</protein>
<accession>Q6NQG7</accession>
<accession>Q9M9C1</accession>
<feature type="chain" id="PRO_0000055769" description="RING-H2 finger protein ATL78">
    <location>
        <begin position="1"/>
        <end position="219"/>
    </location>
</feature>
<feature type="transmembrane region" description="Helical" evidence="2">
    <location>
        <begin position="57"/>
        <end position="77"/>
    </location>
</feature>
<feature type="zinc finger region" description="RING-type; atypical" evidence="3">
    <location>
        <begin position="131"/>
        <end position="173"/>
    </location>
</feature>
<keyword id="KW-0472">Membrane</keyword>
<keyword id="KW-0479">Metal-binding</keyword>
<keyword id="KW-1185">Reference proteome</keyword>
<keyword id="KW-0808">Transferase</keyword>
<keyword id="KW-0812">Transmembrane</keyword>
<keyword id="KW-1133">Transmembrane helix</keyword>
<keyword id="KW-0833">Ubl conjugation pathway</keyword>
<keyword id="KW-0862">Zinc</keyword>
<keyword id="KW-0863">Zinc-finger</keyword>
<gene>
    <name type="primary">ATL78</name>
    <name type="ordered locus">At1g49230</name>
    <name type="ORF">F27J15.2</name>
</gene>
<organism>
    <name type="scientific">Arabidopsis thaliana</name>
    <name type="common">Mouse-ear cress</name>
    <dbReference type="NCBI Taxonomy" id="3702"/>
    <lineage>
        <taxon>Eukaryota</taxon>
        <taxon>Viridiplantae</taxon>
        <taxon>Streptophyta</taxon>
        <taxon>Embryophyta</taxon>
        <taxon>Tracheophyta</taxon>
        <taxon>Spermatophyta</taxon>
        <taxon>Magnoliopsida</taxon>
        <taxon>eudicotyledons</taxon>
        <taxon>Gunneridae</taxon>
        <taxon>Pentapetalae</taxon>
        <taxon>rosids</taxon>
        <taxon>malvids</taxon>
        <taxon>Brassicales</taxon>
        <taxon>Brassicaceae</taxon>
        <taxon>Camelineae</taxon>
        <taxon>Arabidopsis</taxon>
    </lineage>
</organism>
<reference key="1">
    <citation type="journal article" date="2000" name="Nature">
        <title>Sequence and analysis of chromosome 1 of the plant Arabidopsis thaliana.</title>
        <authorList>
            <person name="Theologis A."/>
            <person name="Ecker J.R."/>
            <person name="Palm C.J."/>
            <person name="Federspiel N.A."/>
            <person name="Kaul S."/>
            <person name="White O."/>
            <person name="Alonso J."/>
            <person name="Altafi H."/>
            <person name="Araujo R."/>
            <person name="Bowman C.L."/>
            <person name="Brooks S.Y."/>
            <person name="Buehler E."/>
            <person name="Chan A."/>
            <person name="Chao Q."/>
            <person name="Chen H."/>
            <person name="Cheuk R.F."/>
            <person name="Chin C.W."/>
            <person name="Chung M.K."/>
            <person name="Conn L."/>
            <person name="Conway A.B."/>
            <person name="Conway A.R."/>
            <person name="Creasy T.H."/>
            <person name="Dewar K."/>
            <person name="Dunn P."/>
            <person name="Etgu P."/>
            <person name="Feldblyum T.V."/>
            <person name="Feng J.-D."/>
            <person name="Fong B."/>
            <person name="Fujii C.Y."/>
            <person name="Gill J.E."/>
            <person name="Goldsmith A.D."/>
            <person name="Haas B."/>
            <person name="Hansen N.F."/>
            <person name="Hughes B."/>
            <person name="Huizar L."/>
            <person name="Hunter J.L."/>
            <person name="Jenkins J."/>
            <person name="Johnson-Hopson C."/>
            <person name="Khan S."/>
            <person name="Khaykin E."/>
            <person name="Kim C.J."/>
            <person name="Koo H.L."/>
            <person name="Kremenetskaia I."/>
            <person name="Kurtz D.B."/>
            <person name="Kwan A."/>
            <person name="Lam B."/>
            <person name="Langin-Hooper S."/>
            <person name="Lee A."/>
            <person name="Lee J.M."/>
            <person name="Lenz C.A."/>
            <person name="Li J.H."/>
            <person name="Li Y.-P."/>
            <person name="Lin X."/>
            <person name="Liu S.X."/>
            <person name="Liu Z.A."/>
            <person name="Luros J.S."/>
            <person name="Maiti R."/>
            <person name="Marziali A."/>
            <person name="Militscher J."/>
            <person name="Miranda M."/>
            <person name="Nguyen M."/>
            <person name="Nierman W.C."/>
            <person name="Osborne B.I."/>
            <person name="Pai G."/>
            <person name="Peterson J."/>
            <person name="Pham P.K."/>
            <person name="Rizzo M."/>
            <person name="Rooney T."/>
            <person name="Rowley D."/>
            <person name="Sakano H."/>
            <person name="Salzberg S.L."/>
            <person name="Schwartz J.R."/>
            <person name="Shinn P."/>
            <person name="Southwick A.M."/>
            <person name="Sun H."/>
            <person name="Tallon L.J."/>
            <person name="Tambunga G."/>
            <person name="Toriumi M.J."/>
            <person name="Town C.D."/>
            <person name="Utterback T."/>
            <person name="Van Aken S."/>
            <person name="Vaysberg M."/>
            <person name="Vysotskaia V.S."/>
            <person name="Walker M."/>
            <person name="Wu D."/>
            <person name="Yu G."/>
            <person name="Fraser C.M."/>
            <person name="Venter J.C."/>
            <person name="Davis R.W."/>
        </authorList>
    </citation>
    <scope>NUCLEOTIDE SEQUENCE [LARGE SCALE GENOMIC DNA]</scope>
    <source>
        <strain>cv. Columbia</strain>
    </source>
</reference>
<reference key="2">
    <citation type="journal article" date="2017" name="Plant J.">
        <title>Araport11: a complete reannotation of the Arabidopsis thaliana reference genome.</title>
        <authorList>
            <person name="Cheng C.Y."/>
            <person name="Krishnakumar V."/>
            <person name="Chan A.P."/>
            <person name="Thibaud-Nissen F."/>
            <person name="Schobel S."/>
            <person name="Town C.D."/>
        </authorList>
    </citation>
    <scope>GENOME REANNOTATION</scope>
    <source>
        <strain>cv. Columbia</strain>
    </source>
</reference>
<reference key="3">
    <citation type="journal article" date="2003" name="Science">
        <title>Empirical analysis of transcriptional activity in the Arabidopsis genome.</title>
        <authorList>
            <person name="Yamada K."/>
            <person name="Lim J."/>
            <person name="Dale J.M."/>
            <person name="Chen H."/>
            <person name="Shinn P."/>
            <person name="Palm C.J."/>
            <person name="Southwick A.M."/>
            <person name="Wu H.C."/>
            <person name="Kim C.J."/>
            <person name="Nguyen M."/>
            <person name="Pham P.K."/>
            <person name="Cheuk R.F."/>
            <person name="Karlin-Newmann G."/>
            <person name="Liu S.X."/>
            <person name="Lam B."/>
            <person name="Sakano H."/>
            <person name="Wu T."/>
            <person name="Yu G."/>
            <person name="Miranda M."/>
            <person name="Quach H.L."/>
            <person name="Tripp M."/>
            <person name="Chang C.H."/>
            <person name="Lee J.M."/>
            <person name="Toriumi M.J."/>
            <person name="Chan M.M."/>
            <person name="Tang C.C."/>
            <person name="Onodera C.S."/>
            <person name="Deng J.M."/>
            <person name="Akiyama K."/>
            <person name="Ansari Y."/>
            <person name="Arakawa T."/>
            <person name="Banh J."/>
            <person name="Banno F."/>
            <person name="Bowser L."/>
            <person name="Brooks S.Y."/>
            <person name="Carninci P."/>
            <person name="Chao Q."/>
            <person name="Choy N."/>
            <person name="Enju A."/>
            <person name="Goldsmith A.D."/>
            <person name="Gurjal M."/>
            <person name="Hansen N.F."/>
            <person name="Hayashizaki Y."/>
            <person name="Johnson-Hopson C."/>
            <person name="Hsuan V.W."/>
            <person name="Iida K."/>
            <person name="Karnes M."/>
            <person name="Khan S."/>
            <person name="Koesema E."/>
            <person name="Ishida J."/>
            <person name="Jiang P.X."/>
            <person name="Jones T."/>
            <person name="Kawai J."/>
            <person name="Kamiya A."/>
            <person name="Meyers C."/>
            <person name="Nakajima M."/>
            <person name="Narusaka M."/>
            <person name="Seki M."/>
            <person name="Sakurai T."/>
            <person name="Satou M."/>
            <person name="Tamse R."/>
            <person name="Vaysberg M."/>
            <person name="Wallender E.K."/>
            <person name="Wong C."/>
            <person name="Yamamura Y."/>
            <person name="Yuan S."/>
            <person name="Shinozaki K."/>
            <person name="Davis R.W."/>
            <person name="Theologis A."/>
            <person name="Ecker J.R."/>
        </authorList>
    </citation>
    <scope>NUCLEOTIDE SEQUENCE [LARGE SCALE MRNA]</scope>
    <source>
        <strain>cv. Columbia</strain>
    </source>
</reference>
<reference key="4">
    <citation type="submission" date="2004-09" db="EMBL/GenBank/DDBJ databases">
        <title>Large-scale analysis of RIKEN Arabidopsis full-length (RAFL) cDNAs.</title>
        <authorList>
            <person name="Totoki Y."/>
            <person name="Seki M."/>
            <person name="Ishida J."/>
            <person name="Nakajima M."/>
            <person name="Enju A."/>
            <person name="Kamiya A."/>
            <person name="Narusaka M."/>
            <person name="Shin-i T."/>
            <person name="Nakagawa M."/>
            <person name="Sakamoto N."/>
            <person name="Oishi K."/>
            <person name="Kohara Y."/>
            <person name="Kobayashi M."/>
            <person name="Toyoda A."/>
            <person name="Sakaki Y."/>
            <person name="Sakurai T."/>
            <person name="Iida K."/>
            <person name="Akiyama K."/>
            <person name="Satou M."/>
            <person name="Toyoda T."/>
            <person name="Konagaya A."/>
            <person name="Carninci P."/>
            <person name="Kawai J."/>
            <person name="Hayashizaki Y."/>
            <person name="Shinozaki K."/>
        </authorList>
    </citation>
    <scope>NUCLEOTIDE SEQUENCE [LARGE SCALE MRNA]</scope>
    <source>
        <strain>cv. Columbia</strain>
    </source>
</reference>
<reference key="5">
    <citation type="journal article" date="2002" name="Genome Biol.">
        <title>Evaluation and classification of RING-finger domains encoded by the Arabidopsis genome.</title>
        <authorList>
            <person name="Kosarev P."/>
            <person name="Mayer K.F.X."/>
            <person name="Hardtke C.S."/>
        </authorList>
    </citation>
    <scope>GENE FAMILY ORGANIZATION</scope>
</reference>
<reference key="6">
    <citation type="journal article" date="2006" name="J. Mol. Evol.">
        <title>The ATL gene family from Arabidopsis thaliana and Oryza sativa comprises a large number of putative ubiquitin ligases of the RING-H2 type.</title>
        <authorList>
            <person name="Serrano M."/>
            <person name="Parra S."/>
            <person name="Alcaraz L.D."/>
            <person name="Guzman P."/>
        </authorList>
    </citation>
    <scope>NOMENCLATURE</scope>
    <scope>GENE FAMILY ORGANIZATION</scope>
</reference>
<comment type="catalytic activity">
    <reaction evidence="4">
        <text>S-ubiquitinyl-[E2 ubiquitin-conjugating enzyme]-L-cysteine + [acceptor protein]-L-lysine = [E2 ubiquitin-conjugating enzyme]-L-cysteine + N(6)-ubiquitinyl-[acceptor protein]-L-lysine.</text>
        <dbReference type="EC" id="2.3.2.27"/>
    </reaction>
</comment>
<comment type="pathway">
    <text>Protein modification; protein ubiquitination.</text>
</comment>
<comment type="subcellular location">
    <subcellularLocation>
        <location evidence="4">Membrane</location>
        <topology evidence="4">Single-pass membrane protein</topology>
    </subcellularLocation>
</comment>
<comment type="domain">
    <text evidence="1">The RING-type zinc finger domain mediates binding to an E2 ubiquitin-conjugating enzyme.</text>
</comment>
<comment type="similarity">
    <text evidence="4">Belongs to the RING-type zinc finger family. ATL subfamily.</text>
</comment>
<comment type="sequence caution" evidence="4">
    <conflict type="erroneous gene model prediction">
        <sequence resource="EMBL-CDS" id="AAF69723"/>
    </conflict>
    <text>The predicted gene At1g49220 has been split into 2 genes: At1g49220 and At1g49230.</text>
</comment>